<keyword id="KW-0004">4Fe-4S</keyword>
<keyword id="KW-0408">Iron</keyword>
<keyword id="KW-0411">Iron-sulfur</keyword>
<keyword id="KW-0456">Lyase</keyword>
<keyword id="KW-0479">Metal-binding</keyword>
<keyword id="KW-1185">Reference proteome</keyword>
<keyword id="KW-0949">S-adenosyl-L-methionine</keyword>
<keyword id="KW-0784">Thiamine biosynthesis</keyword>
<keyword id="KW-0862">Zinc</keyword>
<protein>
    <recommendedName>
        <fullName evidence="1">Phosphomethylpyrimidine synthase</fullName>
        <ecNumber evidence="1">4.1.99.17</ecNumber>
    </recommendedName>
    <alternativeName>
        <fullName evidence="1">Hydroxymethylpyrimidine phosphate synthase</fullName>
        <shortName evidence="1">HMP-P synthase</shortName>
        <shortName evidence="1">HMP-phosphate synthase</shortName>
        <shortName evidence="1">HMPP synthase</shortName>
    </alternativeName>
    <alternativeName>
        <fullName evidence="1">Thiamine biosynthesis protein ThiC</fullName>
    </alternativeName>
</protein>
<evidence type="ECO:0000255" key="1">
    <source>
        <dbReference type="HAMAP-Rule" id="MF_00089"/>
    </source>
</evidence>
<reference key="1">
    <citation type="journal article" date="2002" name="Nat. Biotechnol.">
        <title>Genome sequence of the dissimilatory metal ion-reducing bacterium Shewanella oneidensis.</title>
        <authorList>
            <person name="Heidelberg J.F."/>
            <person name="Paulsen I.T."/>
            <person name="Nelson K.E."/>
            <person name="Gaidos E.J."/>
            <person name="Nelson W.C."/>
            <person name="Read T.D."/>
            <person name="Eisen J.A."/>
            <person name="Seshadri R."/>
            <person name="Ward N.L."/>
            <person name="Methe B.A."/>
            <person name="Clayton R.A."/>
            <person name="Meyer T."/>
            <person name="Tsapin A."/>
            <person name="Scott J."/>
            <person name="Beanan M.J."/>
            <person name="Brinkac L.M."/>
            <person name="Daugherty S.C."/>
            <person name="DeBoy R.T."/>
            <person name="Dodson R.J."/>
            <person name="Durkin A.S."/>
            <person name="Haft D.H."/>
            <person name="Kolonay J.F."/>
            <person name="Madupu R."/>
            <person name="Peterson J.D."/>
            <person name="Umayam L.A."/>
            <person name="White O."/>
            <person name="Wolf A.M."/>
            <person name="Vamathevan J.J."/>
            <person name="Weidman J.F."/>
            <person name="Impraim M."/>
            <person name="Lee K."/>
            <person name="Berry K.J."/>
            <person name="Lee C."/>
            <person name="Mueller J."/>
            <person name="Khouri H.M."/>
            <person name="Gill J."/>
            <person name="Utterback T.R."/>
            <person name="McDonald L.A."/>
            <person name="Feldblyum T.V."/>
            <person name="Smith H.O."/>
            <person name="Venter J.C."/>
            <person name="Nealson K.H."/>
            <person name="Fraser C.M."/>
        </authorList>
    </citation>
    <scope>NUCLEOTIDE SEQUENCE [LARGE SCALE GENOMIC DNA]</scope>
    <source>
        <strain>ATCC 700550 / JCM 31522 / CIP 106686 / LMG 19005 / NCIMB 14063 / MR-1</strain>
    </source>
</reference>
<proteinExistence type="inferred from homology"/>
<sequence length="721" mass="79501">MSSLESSSESIAVNILGQTNRRVARAQAQAFIDTLKPLQHPNSQKLYLQGSRADLRVGMRQILQTDTRIGGRAAAPNVEKNPPIPVYDCAGPYSDPAAQINVRQGLAKLRLPWIIERQDTEVLDCTTSDFTQQRLKDDGLDHLRFEAGSSAIIRPRRALPGKRVSQLHYARQGIITPEMEYVAIRENMALADVQDEILNRRGQGESFGAVIGKPITPEFVRDEIARGRAIIPLNINHPEAEPMTIGRNFLVKVNANIGNSAVTSSIEEEVEKLVWSTRWGADTVMDLSTGRYIHETREWIIRNSPVPIGTVPIYQALEKVNGVAEHLTWEVFRDTLIEQAEQGVDYFTIHAGVLLRYVPMTAKRVTGIVSRGGSIMAKWCLSHHQENFLYTHFREICELCVAYDVSLSLGDGMRPGSIADANDEAQFAELETLGELVNIAWEYDVQTIIEGPGHIPMQLIKENMDKQLIHCAEAPFYTLGPQITDIAPGYDHFTSGIGAAMIAWYGCAMLCYVTPKEHLGLPNKQDVKQGLIAYKIAAHAADIAKGHPGAQIRDNALSKARFEFRWEDQYNLGLDPDTARAYHDESLPQESAKVAHFCSMCGPKFCSMKITQDVRDYAASLEADAKAQSLAAETDGALAPLGSVQQVKSGHSELSHIDAELNYIAVKTQDELTAAMAQKSAEFAALGAKLYLPLDNANAANELAKHKDGAKLQSKTQVAKV</sequence>
<organism>
    <name type="scientific">Shewanella oneidensis (strain ATCC 700550 / JCM 31522 / CIP 106686 / LMG 19005 / NCIMB 14063 / MR-1)</name>
    <dbReference type="NCBI Taxonomy" id="211586"/>
    <lineage>
        <taxon>Bacteria</taxon>
        <taxon>Pseudomonadati</taxon>
        <taxon>Pseudomonadota</taxon>
        <taxon>Gammaproteobacteria</taxon>
        <taxon>Alteromonadales</taxon>
        <taxon>Shewanellaceae</taxon>
        <taxon>Shewanella</taxon>
    </lineage>
</organism>
<comment type="function">
    <text evidence="1">Catalyzes the synthesis of the hydroxymethylpyrimidine phosphate (HMP-P) moiety of thiamine from aminoimidazole ribotide (AIR) in a radical S-adenosyl-L-methionine (SAM)-dependent reaction.</text>
</comment>
<comment type="catalytic activity">
    <reaction evidence="1">
        <text>5-amino-1-(5-phospho-beta-D-ribosyl)imidazole + S-adenosyl-L-methionine = 4-amino-2-methyl-5-(phosphooxymethyl)pyrimidine + CO + 5'-deoxyadenosine + formate + L-methionine + 3 H(+)</text>
        <dbReference type="Rhea" id="RHEA:24840"/>
        <dbReference type="ChEBI" id="CHEBI:15378"/>
        <dbReference type="ChEBI" id="CHEBI:15740"/>
        <dbReference type="ChEBI" id="CHEBI:17245"/>
        <dbReference type="ChEBI" id="CHEBI:17319"/>
        <dbReference type="ChEBI" id="CHEBI:57844"/>
        <dbReference type="ChEBI" id="CHEBI:58354"/>
        <dbReference type="ChEBI" id="CHEBI:59789"/>
        <dbReference type="ChEBI" id="CHEBI:137981"/>
        <dbReference type="EC" id="4.1.99.17"/>
    </reaction>
</comment>
<comment type="cofactor">
    <cofactor evidence="1">
        <name>[4Fe-4S] cluster</name>
        <dbReference type="ChEBI" id="CHEBI:49883"/>
    </cofactor>
    <text evidence="1">Binds 1 [4Fe-4S] cluster per subunit. The cluster is coordinated with 3 cysteines and an exchangeable S-adenosyl-L-methionine.</text>
</comment>
<comment type="pathway">
    <text evidence="1">Cofactor biosynthesis; thiamine diphosphate biosynthesis.</text>
</comment>
<comment type="subunit">
    <text evidence="1">Homodimer.</text>
</comment>
<comment type="similarity">
    <text evidence="1">Belongs to the ThiC family.</text>
</comment>
<dbReference type="EC" id="4.1.99.17" evidence="1"/>
<dbReference type="EMBL" id="AE014299">
    <property type="protein sequence ID" value="AAN55479.1"/>
    <property type="molecule type" value="Genomic_DNA"/>
</dbReference>
<dbReference type="RefSeq" id="NP_718035.1">
    <property type="nucleotide sequence ID" value="NC_004347.2"/>
</dbReference>
<dbReference type="RefSeq" id="WP_011072421.1">
    <property type="nucleotide sequence ID" value="NC_004347.2"/>
</dbReference>
<dbReference type="SMR" id="Q8EED7"/>
<dbReference type="STRING" id="211586.SO_2445"/>
<dbReference type="PaxDb" id="211586-SO_2445"/>
<dbReference type="KEGG" id="son:SO_2445"/>
<dbReference type="PATRIC" id="fig|211586.12.peg.2353"/>
<dbReference type="eggNOG" id="COG0422">
    <property type="taxonomic scope" value="Bacteria"/>
</dbReference>
<dbReference type="HOGENOM" id="CLU_013181_2_1_6"/>
<dbReference type="OrthoDB" id="9805897at2"/>
<dbReference type="PhylomeDB" id="Q8EED7"/>
<dbReference type="BioCyc" id="SONE211586:G1GMP-2236-MONOMER"/>
<dbReference type="UniPathway" id="UPA00060"/>
<dbReference type="Proteomes" id="UP000008186">
    <property type="component" value="Chromosome"/>
</dbReference>
<dbReference type="GO" id="GO:0005829">
    <property type="term" value="C:cytosol"/>
    <property type="evidence" value="ECO:0000318"/>
    <property type="project" value="GO_Central"/>
</dbReference>
<dbReference type="GO" id="GO:0051539">
    <property type="term" value="F:4 iron, 4 sulfur cluster binding"/>
    <property type="evidence" value="ECO:0007669"/>
    <property type="project" value="UniProtKB-KW"/>
</dbReference>
<dbReference type="GO" id="GO:0016830">
    <property type="term" value="F:carbon-carbon lyase activity"/>
    <property type="evidence" value="ECO:0007669"/>
    <property type="project" value="InterPro"/>
</dbReference>
<dbReference type="GO" id="GO:0008270">
    <property type="term" value="F:zinc ion binding"/>
    <property type="evidence" value="ECO:0007669"/>
    <property type="project" value="UniProtKB-UniRule"/>
</dbReference>
<dbReference type="GO" id="GO:0009228">
    <property type="term" value="P:thiamine biosynthetic process"/>
    <property type="evidence" value="ECO:0000318"/>
    <property type="project" value="GO_Central"/>
</dbReference>
<dbReference type="GO" id="GO:0009229">
    <property type="term" value="P:thiamine diphosphate biosynthetic process"/>
    <property type="evidence" value="ECO:0007669"/>
    <property type="project" value="UniProtKB-UniRule"/>
</dbReference>
<dbReference type="FunFam" id="3.20.20.540:FF:000001">
    <property type="entry name" value="Phosphomethylpyrimidine synthase"/>
    <property type="match status" value="1"/>
</dbReference>
<dbReference type="Gene3D" id="6.10.250.620">
    <property type="match status" value="1"/>
</dbReference>
<dbReference type="Gene3D" id="3.20.20.540">
    <property type="entry name" value="Radical SAM ThiC family, central domain"/>
    <property type="match status" value="1"/>
</dbReference>
<dbReference type="HAMAP" id="MF_00089">
    <property type="entry name" value="ThiC"/>
    <property type="match status" value="1"/>
</dbReference>
<dbReference type="InterPro" id="IPR037509">
    <property type="entry name" value="ThiC"/>
</dbReference>
<dbReference type="InterPro" id="IPR025747">
    <property type="entry name" value="ThiC-associated_dom"/>
</dbReference>
<dbReference type="InterPro" id="IPR038521">
    <property type="entry name" value="ThiC/Bza_core_dom"/>
</dbReference>
<dbReference type="InterPro" id="IPR002817">
    <property type="entry name" value="ThiC/BzaA/B"/>
</dbReference>
<dbReference type="NCBIfam" id="NF006763">
    <property type="entry name" value="PRK09284.1"/>
    <property type="match status" value="1"/>
</dbReference>
<dbReference type="NCBIfam" id="NF009895">
    <property type="entry name" value="PRK13352.1"/>
    <property type="match status" value="1"/>
</dbReference>
<dbReference type="NCBIfam" id="TIGR00190">
    <property type="entry name" value="thiC"/>
    <property type="match status" value="1"/>
</dbReference>
<dbReference type="PANTHER" id="PTHR30557:SF1">
    <property type="entry name" value="PHOSPHOMETHYLPYRIMIDINE SYNTHASE, CHLOROPLASTIC"/>
    <property type="match status" value="1"/>
</dbReference>
<dbReference type="PANTHER" id="PTHR30557">
    <property type="entry name" value="THIAMINE BIOSYNTHESIS PROTEIN THIC"/>
    <property type="match status" value="1"/>
</dbReference>
<dbReference type="Pfam" id="PF13667">
    <property type="entry name" value="ThiC-associated"/>
    <property type="match status" value="1"/>
</dbReference>
<dbReference type="Pfam" id="PF01964">
    <property type="entry name" value="ThiC_Rad_SAM"/>
    <property type="match status" value="1"/>
</dbReference>
<dbReference type="SFLD" id="SFLDF00407">
    <property type="entry name" value="phosphomethylpyrimidine_syntha"/>
    <property type="match status" value="1"/>
</dbReference>
<dbReference type="SFLD" id="SFLDG01114">
    <property type="entry name" value="phosphomethylpyrimidine_syntha"/>
    <property type="match status" value="1"/>
</dbReference>
<dbReference type="SFLD" id="SFLDS00113">
    <property type="entry name" value="Radical_SAM_Phosphomethylpyrim"/>
    <property type="match status" value="1"/>
</dbReference>
<feature type="chain" id="PRO_0000152836" description="Phosphomethylpyrimidine synthase">
    <location>
        <begin position="1"/>
        <end position="721"/>
    </location>
</feature>
<feature type="binding site" evidence="1">
    <location>
        <position position="256"/>
    </location>
    <ligand>
        <name>substrate</name>
    </ligand>
</feature>
<feature type="binding site" evidence="1">
    <location>
        <position position="285"/>
    </location>
    <ligand>
        <name>substrate</name>
    </ligand>
</feature>
<feature type="binding site" evidence="1">
    <location>
        <position position="314"/>
    </location>
    <ligand>
        <name>substrate</name>
    </ligand>
</feature>
<feature type="binding site" evidence="1">
    <location>
        <position position="350"/>
    </location>
    <ligand>
        <name>substrate</name>
    </ligand>
</feature>
<feature type="binding site" evidence="1">
    <location>
        <begin position="370"/>
        <end position="372"/>
    </location>
    <ligand>
        <name>substrate</name>
    </ligand>
</feature>
<feature type="binding site" evidence="1">
    <location>
        <begin position="411"/>
        <end position="414"/>
    </location>
    <ligand>
        <name>substrate</name>
    </ligand>
</feature>
<feature type="binding site" evidence="1">
    <location>
        <position position="450"/>
    </location>
    <ligand>
        <name>substrate</name>
    </ligand>
</feature>
<feature type="binding site" evidence="1">
    <location>
        <position position="454"/>
    </location>
    <ligand>
        <name>Zn(2+)</name>
        <dbReference type="ChEBI" id="CHEBI:29105"/>
    </ligand>
</feature>
<feature type="binding site" evidence="1">
    <location>
        <position position="477"/>
    </location>
    <ligand>
        <name>substrate</name>
    </ligand>
</feature>
<feature type="binding site" evidence="1">
    <location>
        <position position="518"/>
    </location>
    <ligand>
        <name>Zn(2+)</name>
        <dbReference type="ChEBI" id="CHEBI:29105"/>
    </ligand>
</feature>
<feature type="binding site" evidence="1">
    <location>
        <position position="598"/>
    </location>
    <ligand>
        <name>[4Fe-4S] cluster</name>
        <dbReference type="ChEBI" id="CHEBI:49883"/>
        <note>4Fe-4S-S-AdoMet</note>
    </ligand>
</feature>
<feature type="binding site" evidence="1">
    <location>
        <position position="601"/>
    </location>
    <ligand>
        <name>[4Fe-4S] cluster</name>
        <dbReference type="ChEBI" id="CHEBI:49883"/>
        <note>4Fe-4S-S-AdoMet</note>
    </ligand>
</feature>
<feature type="binding site" evidence="1">
    <location>
        <position position="606"/>
    </location>
    <ligand>
        <name>[4Fe-4S] cluster</name>
        <dbReference type="ChEBI" id="CHEBI:49883"/>
        <note>4Fe-4S-S-AdoMet</note>
    </ligand>
</feature>
<name>THIC_SHEON</name>
<gene>
    <name evidence="1" type="primary">thiC</name>
    <name type="ordered locus">SO_2445</name>
</gene>
<accession>Q8EED7</accession>